<feature type="chain" id="PRO_1000193121" description="Phosphate acyltransferase">
    <location>
        <begin position="1"/>
        <end position="361"/>
    </location>
</feature>
<feature type="region of interest" description="Disordered" evidence="2">
    <location>
        <begin position="340"/>
        <end position="361"/>
    </location>
</feature>
<gene>
    <name evidence="1" type="primary">plsX</name>
    <name type="ordered locus">A2cp1_2935</name>
</gene>
<accession>B8JEX6</accession>
<sequence length="361" mass="37784">MVGKIAPIAVDAMGGDHAPGAIVQGAVNAARKGLPVVLVGPEARVREELARHRAASSLPLEVHPATEVVEMHDHPGQAMRRKKDNSIRVCFDLVASGRAAGMVSAGNSGAVMAGAILVLGRPEGVERPAIVSVLPALKGAPLMLDMGAVVDCRPIHLVQFALMGEVYSRRVHGVTRPRVAILSNGEEDTKGTDLTRAAAAALRRAPIDFVGYCEGRDLLTGEVDVIVTDGFTGNVALKTMEGTAKVVGEYLKRALRSTTVSKIGGLLSRAALEGMKKRIDWREVGGAPLVGVNGVGFISHGRSDALAIENAIRRAGDAARTHFIDEIARAVAPSHALLEVPADGAATEQGPTPRRIAPPRT</sequence>
<name>PLSX_ANAD2</name>
<organism>
    <name type="scientific">Anaeromyxobacter dehalogenans (strain 2CP-1 / ATCC BAA-258)</name>
    <dbReference type="NCBI Taxonomy" id="455488"/>
    <lineage>
        <taxon>Bacteria</taxon>
        <taxon>Pseudomonadati</taxon>
        <taxon>Myxococcota</taxon>
        <taxon>Myxococcia</taxon>
        <taxon>Myxococcales</taxon>
        <taxon>Cystobacterineae</taxon>
        <taxon>Anaeromyxobacteraceae</taxon>
        <taxon>Anaeromyxobacter</taxon>
    </lineage>
</organism>
<dbReference type="EC" id="2.3.1.274" evidence="1"/>
<dbReference type="EMBL" id="CP001359">
    <property type="protein sequence ID" value="ACL66272.1"/>
    <property type="molecule type" value="Genomic_DNA"/>
</dbReference>
<dbReference type="RefSeq" id="WP_012634011.1">
    <property type="nucleotide sequence ID" value="NC_011891.1"/>
</dbReference>
<dbReference type="SMR" id="B8JEX6"/>
<dbReference type="KEGG" id="acp:A2cp1_2935"/>
<dbReference type="HOGENOM" id="CLU_039379_1_1_7"/>
<dbReference type="UniPathway" id="UPA00085"/>
<dbReference type="Proteomes" id="UP000007089">
    <property type="component" value="Chromosome"/>
</dbReference>
<dbReference type="GO" id="GO:0005737">
    <property type="term" value="C:cytoplasm"/>
    <property type="evidence" value="ECO:0007669"/>
    <property type="project" value="UniProtKB-SubCell"/>
</dbReference>
<dbReference type="GO" id="GO:0043811">
    <property type="term" value="F:phosphate:acyl-[acyl carrier protein] acyltransferase activity"/>
    <property type="evidence" value="ECO:0007669"/>
    <property type="project" value="UniProtKB-UniRule"/>
</dbReference>
<dbReference type="GO" id="GO:0006633">
    <property type="term" value="P:fatty acid biosynthetic process"/>
    <property type="evidence" value="ECO:0007669"/>
    <property type="project" value="UniProtKB-UniRule"/>
</dbReference>
<dbReference type="GO" id="GO:0008654">
    <property type="term" value="P:phospholipid biosynthetic process"/>
    <property type="evidence" value="ECO:0007669"/>
    <property type="project" value="UniProtKB-KW"/>
</dbReference>
<dbReference type="Gene3D" id="3.40.718.10">
    <property type="entry name" value="Isopropylmalate Dehydrogenase"/>
    <property type="match status" value="1"/>
</dbReference>
<dbReference type="HAMAP" id="MF_00019">
    <property type="entry name" value="PlsX"/>
    <property type="match status" value="1"/>
</dbReference>
<dbReference type="InterPro" id="IPR003664">
    <property type="entry name" value="FA_synthesis"/>
</dbReference>
<dbReference type="InterPro" id="IPR012281">
    <property type="entry name" value="Phospholipid_synth_PlsX-like"/>
</dbReference>
<dbReference type="NCBIfam" id="TIGR00182">
    <property type="entry name" value="plsX"/>
    <property type="match status" value="1"/>
</dbReference>
<dbReference type="PANTHER" id="PTHR30100">
    <property type="entry name" value="FATTY ACID/PHOSPHOLIPID SYNTHESIS PROTEIN PLSX"/>
    <property type="match status" value="1"/>
</dbReference>
<dbReference type="PANTHER" id="PTHR30100:SF1">
    <property type="entry name" value="PHOSPHATE ACYLTRANSFERASE"/>
    <property type="match status" value="1"/>
</dbReference>
<dbReference type="Pfam" id="PF02504">
    <property type="entry name" value="FA_synthesis"/>
    <property type="match status" value="1"/>
</dbReference>
<dbReference type="PIRSF" id="PIRSF002465">
    <property type="entry name" value="Phsphlp_syn_PlsX"/>
    <property type="match status" value="1"/>
</dbReference>
<dbReference type="SUPFAM" id="SSF53659">
    <property type="entry name" value="Isocitrate/Isopropylmalate dehydrogenase-like"/>
    <property type="match status" value="1"/>
</dbReference>
<reference key="1">
    <citation type="submission" date="2009-01" db="EMBL/GenBank/DDBJ databases">
        <title>Complete sequence of Anaeromyxobacter dehalogenans 2CP-1.</title>
        <authorList>
            <person name="Lucas S."/>
            <person name="Copeland A."/>
            <person name="Lapidus A."/>
            <person name="Glavina del Rio T."/>
            <person name="Dalin E."/>
            <person name="Tice H."/>
            <person name="Bruce D."/>
            <person name="Goodwin L."/>
            <person name="Pitluck S."/>
            <person name="Saunders E."/>
            <person name="Brettin T."/>
            <person name="Detter J.C."/>
            <person name="Han C."/>
            <person name="Larimer F."/>
            <person name="Land M."/>
            <person name="Hauser L."/>
            <person name="Kyrpides N."/>
            <person name="Ovchinnikova G."/>
            <person name="Beliaev A.S."/>
            <person name="Richardson P."/>
        </authorList>
    </citation>
    <scope>NUCLEOTIDE SEQUENCE [LARGE SCALE GENOMIC DNA]</scope>
    <source>
        <strain>2CP-1 / ATCC BAA-258</strain>
    </source>
</reference>
<comment type="function">
    <text evidence="1">Catalyzes the reversible formation of acyl-phosphate (acyl-PO(4)) from acyl-[acyl-carrier-protein] (acyl-ACP). This enzyme utilizes acyl-ACP as fatty acyl donor, but not acyl-CoA.</text>
</comment>
<comment type="catalytic activity">
    <reaction evidence="1">
        <text>a fatty acyl-[ACP] + phosphate = an acyl phosphate + holo-[ACP]</text>
        <dbReference type="Rhea" id="RHEA:42292"/>
        <dbReference type="Rhea" id="RHEA-COMP:9685"/>
        <dbReference type="Rhea" id="RHEA-COMP:14125"/>
        <dbReference type="ChEBI" id="CHEBI:43474"/>
        <dbReference type="ChEBI" id="CHEBI:59918"/>
        <dbReference type="ChEBI" id="CHEBI:64479"/>
        <dbReference type="ChEBI" id="CHEBI:138651"/>
        <dbReference type="EC" id="2.3.1.274"/>
    </reaction>
</comment>
<comment type="pathway">
    <text evidence="1">Lipid metabolism; phospholipid metabolism.</text>
</comment>
<comment type="subunit">
    <text evidence="1">Homodimer. Probably interacts with PlsY.</text>
</comment>
<comment type="subcellular location">
    <subcellularLocation>
        <location evidence="1">Cytoplasm</location>
    </subcellularLocation>
    <text evidence="1">Associated with the membrane possibly through PlsY.</text>
</comment>
<comment type="similarity">
    <text evidence="1">Belongs to the PlsX family.</text>
</comment>
<proteinExistence type="inferred from homology"/>
<evidence type="ECO:0000255" key="1">
    <source>
        <dbReference type="HAMAP-Rule" id="MF_00019"/>
    </source>
</evidence>
<evidence type="ECO:0000256" key="2">
    <source>
        <dbReference type="SAM" id="MobiDB-lite"/>
    </source>
</evidence>
<protein>
    <recommendedName>
        <fullName evidence="1">Phosphate acyltransferase</fullName>
        <ecNumber evidence="1">2.3.1.274</ecNumber>
    </recommendedName>
    <alternativeName>
        <fullName evidence="1">Acyl-ACP phosphotransacylase</fullName>
    </alternativeName>
    <alternativeName>
        <fullName evidence="1">Acyl-[acyl-carrier-protein]--phosphate acyltransferase</fullName>
    </alternativeName>
    <alternativeName>
        <fullName evidence="1">Phosphate-acyl-ACP acyltransferase</fullName>
    </alternativeName>
</protein>
<keyword id="KW-0963">Cytoplasm</keyword>
<keyword id="KW-0444">Lipid biosynthesis</keyword>
<keyword id="KW-0443">Lipid metabolism</keyword>
<keyword id="KW-0594">Phospholipid biosynthesis</keyword>
<keyword id="KW-1208">Phospholipid metabolism</keyword>
<keyword id="KW-0808">Transferase</keyword>